<accession>B3EWV7</accession>
<feature type="peptide" id="PRO_0000421214" description="Cupiennin-4b" evidence="1">
    <location>
        <begin position="1"/>
        <end position="27"/>
    </location>
</feature>
<feature type="modified residue" description="Glutamine amide" evidence="1">
    <location>
        <position position="27"/>
    </location>
</feature>
<sequence length="27" mass="3118">VYGMLFKFLAKKVAKKLISHVAKKQLQ</sequence>
<proteinExistence type="evidence at protein level"/>
<evidence type="ECO:0000269" key="1">
    <source>
    </source>
</evidence>
<evidence type="ECO:0000303" key="2">
    <source>
    </source>
</evidence>
<evidence type="ECO:0000303" key="3">
    <source ref="2"/>
</evidence>
<evidence type="ECO:0000305" key="4"/>
<evidence type="ECO:0000305" key="5">
    <source>
    </source>
</evidence>
<organism>
    <name type="scientific">Cupiennius salei</name>
    <name type="common">American wandering spider</name>
    <dbReference type="NCBI Taxonomy" id="6928"/>
    <lineage>
        <taxon>Eukaryota</taxon>
        <taxon>Metazoa</taxon>
        <taxon>Ecdysozoa</taxon>
        <taxon>Arthropoda</taxon>
        <taxon>Chelicerata</taxon>
        <taxon>Arachnida</taxon>
        <taxon>Araneae</taxon>
        <taxon>Araneomorphae</taxon>
        <taxon>Entelegynae</taxon>
        <taxon>Lycosoidea</taxon>
        <taxon>Ctenidae</taxon>
        <taxon>Cupiennius</taxon>
    </lineage>
</organism>
<protein>
    <recommendedName>
        <fullName evidence="3">Cupiennin-4b</fullName>
        <shortName evidence="3">Cu-4b</shortName>
    </recommendedName>
    <alternativeName>
        <fullName evidence="2">Short cationic peptide-4b</fullName>
        <shortName evidence="2">SCP-4b</shortName>
    </alternativeName>
</protein>
<dbReference type="GO" id="GO:0005576">
    <property type="term" value="C:extracellular region"/>
    <property type="evidence" value="ECO:0007669"/>
    <property type="project" value="UniProtKB-SubCell"/>
</dbReference>
<dbReference type="GO" id="GO:0090729">
    <property type="term" value="F:toxin activity"/>
    <property type="evidence" value="ECO:0007669"/>
    <property type="project" value="UniProtKB-KW"/>
</dbReference>
<dbReference type="GO" id="GO:0042742">
    <property type="term" value="P:defense response to bacterium"/>
    <property type="evidence" value="ECO:0007669"/>
    <property type="project" value="InterPro"/>
</dbReference>
<dbReference type="InterPro" id="IPR035164">
    <property type="entry name" value="Cupiennin"/>
</dbReference>
<dbReference type="Pfam" id="PF17563">
    <property type="entry name" value="Cu"/>
    <property type="match status" value="1"/>
</dbReference>
<keyword id="KW-0027">Amidation</keyword>
<keyword id="KW-0903">Direct protein sequencing</keyword>
<keyword id="KW-0964">Secreted</keyword>
<keyword id="KW-0800">Toxin</keyword>
<reference key="1">
    <citation type="journal article" date="2012" name="FEBS J.">
        <title>Multicomponent venom of the spider Cupiennius salei: a bioanalytical investigation applying different strategies.</title>
        <authorList>
            <person name="Trachsel C."/>
            <person name="Siegemund D."/>
            <person name="Kampfer U."/>
            <person name="Kopp L.S."/>
            <person name="Buhr C."/>
            <person name="Grossmann J."/>
            <person name="Luthi C."/>
            <person name="Cunningham M."/>
            <person name="Nentwig W."/>
            <person name="Kuhn-Nentwig L."/>
            <person name="Schurch S."/>
            <person name="Schaller J."/>
        </authorList>
    </citation>
    <scope>PROTEIN SEQUENCE</scope>
    <scope>MASS SPECTROMETRY</scope>
    <scope>AMIDATION AT GLN-27</scope>
    <source>
        <tissue>Venom</tissue>
    </source>
</reference>
<reference key="2">
    <citation type="unpublished observations" date="2015-06">
        <authorList>
            <person name="Kuhn-Nentwig L."/>
            <person name="Gohel T."/>
        </authorList>
    </citation>
    <scope>NOMENCLATURE</scope>
</reference>
<comment type="subcellular location">
    <subcellularLocation>
        <location evidence="1">Secreted</location>
    </subcellularLocation>
</comment>
<comment type="tissue specificity">
    <text evidence="5">Expressed by the venom gland.</text>
</comment>
<comment type="mass spectrometry" mass="3114.898" method="Electrospray" evidence="1"/>
<comment type="similarity">
    <text evidence="4">Belongs to the cationic peptide 04 (cupiennin) family. 08 subfamily.</text>
</comment>
<name>TXC4B_CUPSA</name>